<keyword id="KW-0479">Metal-binding</keyword>
<keyword id="KW-1185">Reference proteome</keyword>
<keyword id="KW-0677">Repeat</keyword>
<keyword id="KW-0808">Transferase</keyword>
<keyword id="KW-0833">Ubl conjugation pathway</keyword>
<keyword id="KW-0862">Zinc</keyword>
<keyword id="KW-0863">Zinc-finger</keyword>
<accession>A9JTG5</accession>
<evidence type="ECO:0000250" key="1">
    <source>
        <dbReference type="UniProtKB" id="Q9BYM8"/>
    </source>
</evidence>
<evidence type="ECO:0000250" key="2">
    <source>
        <dbReference type="UniProtKB" id="Q9WUB0"/>
    </source>
</evidence>
<evidence type="ECO:0000255" key="3">
    <source>
        <dbReference type="PROSITE-ProRule" id="PRU00322"/>
    </source>
</evidence>
<evidence type="ECO:0000255" key="4">
    <source>
        <dbReference type="PROSITE-ProRule" id="PRU01221"/>
    </source>
</evidence>
<evidence type="ECO:0000256" key="5">
    <source>
        <dbReference type="SAM" id="MobiDB-lite"/>
    </source>
</evidence>
<evidence type="ECO:0000305" key="6"/>
<dbReference type="EC" id="2.3.2.31" evidence="1"/>
<dbReference type="EMBL" id="BC155331">
    <property type="protein sequence ID" value="AAI55332.1"/>
    <property type="molecule type" value="mRNA"/>
</dbReference>
<dbReference type="RefSeq" id="NP_001104670.1">
    <property type="nucleotide sequence ID" value="NM_001111200.1"/>
</dbReference>
<dbReference type="SMR" id="A9JTG5"/>
<dbReference type="FunCoup" id="A9JTG5">
    <property type="interactions" value="381"/>
</dbReference>
<dbReference type="STRING" id="7955.ENSDARP00000078154"/>
<dbReference type="PaxDb" id="7955-ENSDARP00000078154"/>
<dbReference type="Ensembl" id="ENSDART00000083719">
    <property type="protein sequence ID" value="ENSDARP00000078154"/>
    <property type="gene ID" value="ENSDARG00000059871"/>
</dbReference>
<dbReference type="GeneID" id="569903"/>
<dbReference type="KEGG" id="dre:569903"/>
<dbReference type="AGR" id="ZFIN:ZDB-GENE-080220-52"/>
<dbReference type="CTD" id="569903"/>
<dbReference type="ZFIN" id="ZDB-GENE-080220-52">
    <property type="gene designation" value="shrprbck1r"/>
</dbReference>
<dbReference type="eggNOG" id="KOG1815">
    <property type="taxonomic scope" value="Eukaryota"/>
</dbReference>
<dbReference type="HOGENOM" id="CLU_014998_1_0_1"/>
<dbReference type="InParanoid" id="A9JTG5"/>
<dbReference type="OMA" id="CRICYVD"/>
<dbReference type="OrthoDB" id="261960at2759"/>
<dbReference type="PhylomeDB" id="A9JTG5"/>
<dbReference type="TreeFam" id="TF323486"/>
<dbReference type="UniPathway" id="UPA00143"/>
<dbReference type="PRO" id="PR:A9JTG5"/>
<dbReference type="Proteomes" id="UP000000437">
    <property type="component" value="Chromosome 7"/>
</dbReference>
<dbReference type="Bgee" id="ENSDARG00000059871">
    <property type="expression patterns" value="Expressed in muscle tissue and 31 other cell types or tissues"/>
</dbReference>
<dbReference type="ExpressionAtlas" id="A9JTG5">
    <property type="expression patterns" value="baseline"/>
</dbReference>
<dbReference type="GO" id="GO:0071797">
    <property type="term" value="C:LUBAC complex"/>
    <property type="evidence" value="ECO:0000250"/>
    <property type="project" value="UniProtKB"/>
</dbReference>
<dbReference type="GO" id="GO:0043130">
    <property type="term" value="F:ubiquitin binding"/>
    <property type="evidence" value="ECO:0000250"/>
    <property type="project" value="UniProtKB"/>
</dbReference>
<dbReference type="GO" id="GO:0004842">
    <property type="term" value="F:ubiquitin-protein transferase activity"/>
    <property type="evidence" value="ECO:0000318"/>
    <property type="project" value="GO_Central"/>
</dbReference>
<dbReference type="GO" id="GO:0008270">
    <property type="term" value="F:zinc ion binding"/>
    <property type="evidence" value="ECO:0007669"/>
    <property type="project" value="UniProtKB-KW"/>
</dbReference>
<dbReference type="GO" id="GO:0042742">
    <property type="term" value="P:defense response to bacterium"/>
    <property type="evidence" value="ECO:0000250"/>
    <property type="project" value="UniProtKB"/>
</dbReference>
<dbReference type="GO" id="GO:0048701">
    <property type="term" value="P:embryonic cranial skeleton morphogenesis"/>
    <property type="evidence" value="ECO:0000315"/>
    <property type="project" value="ZFIN"/>
</dbReference>
<dbReference type="GO" id="GO:0071600">
    <property type="term" value="P:otic vesicle morphogenesis"/>
    <property type="evidence" value="ECO:0000315"/>
    <property type="project" value="ZFIN"/>
</dbReference>
<dbReference type="GO" id="GO:0043123">
    <property type="term" value="P:positive regulation of canonical NF-kappaB signal transduction"/>
    <property type="evidence" value="ECO:0000250"/>
    <property type="project" value="UniProtKB"/>
</dbReference>
<dbReference type="GO" id="GO:0043161">
    <property type="term" value="P:proteasome-mediated ubiquitin-dependent protein catabolic process"/>
    <property type="evidence" value="ECO:0000318"/>
    <property type="project" value="GO_Central"/>
</dbReference>
<dbReference type="GO" id="GO:0097039">
    <property type="term" value="P:protein linear polyubiquitination"/>
    <property type="evidence" value="ECO:0000250"/>
    <property type="project" value="UniProtKB"/>
</dbReference>
<dbReference type="CDD" id="cd20345">
    <property type="entry name" value="BRcat_RBR_HOIL1"/>
    <property type="match status" value="1"/>
</dbReference>
<dbReference type="CDD" id="cd16633">
    <property type="entry name" value="mRING-HC-C3HC3D_RBR_HOIL1"/>
    <property type="match status" value="1"/>
</dbReference>
<dbReference type="CDD" id="cd13305">
    <property type="entry name" value="PH_SHARPIN"/>
    <property type="match status" value="1"/>
</dbReference>
<dbReference type="CDD" id="cd20358">
    <property type="entry name" value="Rcat_RBR_HOIL1"/>
    <property type="match status" value="1"/>
</dbReference>
<dbReference type="CDD" id="cd01799">
    <property type="entry name" value="Ubl_HOIL1"/>
    <property type="match status" value="1"/>
</dbReference>
<dbReference type="FunFam" id="2.30.29.30:FF:000447">
    <property type="entry name" value="RanBP-type and C3HC4-type zinc finger-containing protein 1"/>
    <property type="match status" value="1"/>
</dbReference>
<dbReference type="FunFam" id="2.30.30.380:FF:000007">
    <property type="entry name" value="RanBP-type and C3HC4-type zinc finger-containing protein 1"/>
    <property type="match status" value="1"/>
</dbReference>
<dbReference type="FunFam" id="3.30.40.10:FF:000137">
    <property type="entry name" value="RanBP-type and C3HC4-type zinc finger-containing protein 1"/>
    <property type="match status" value="1"/>
</dbReference>
<dbReference type="FunFam" id="1.20.120.1750:FF:000012">
    <property type="entry name" value="ranBP-type and C3HC4-type zinc finger-containing protein 1 isoform X1"/>
    <property type="match status" value="1"/>
</dbReference>
<dbReference type="FunFam" id="3.10.20.90:FF:000130">
    <property type="entry name" value="SHANK-associated RH domain interactor"/>
    <property type="match status" value="1"/>
</dbReference>
<dbReference type="Gene3D" id="1.20.120.1750">
    <property type="match status" value="1"/>
</dbReference>
<dbReference type="Gene3D" id="3.10.20.90">
    <property type="entry name" value="Phosphatidylinositol 3-kinase Catalytic Subunit, Chain A, domain 1"/>
    <property type="match status" value="1"/>
</dbReference>
<dbReference type="Gene3D" id="2.30.29.30">
    <property type="entry name" value="Pleckstrin-homology domain (PH domain)/Phosphotyrosine-binding domain (PTB)"/>
    <property type="match status" value="1"/>
</dbReference>
<dbReference type="Gene3D" id="3.30.40.10">
    <property type="entry name" value="Zinc/RING finger domain, C3HC4 (zinc finger)"/>
    <property type="match status" value="1"/>
</dbReference>
<dbReference type="Gene3D" id="2.30.30.380">
    <property type="entry name" value="Zn-finger domain of Sec23/24"/>
    <property type="match status" value="1"/>
</dbReference>
<dbReference type="InterPro" id="IPR047558">
    <property type="entry name" value="BRcat_RBR_HOIL1"/>
</dbReference>
<dbReference type="InterPro" id="IPR047559">
    <property type="entry name" value="HOIL1_RBR_mRING-HC-C3HC3D"/>
</dbReference>
<dbReference type="InterPro" id="IPR051628">
    <property type="entry name" value="LUBAC_E3_Ligases"/>
</dbReference>
<dbReference type="InterPro" id="IPR011993">
    <property type="entry name" value="PH-like_dom_sf"/>
</dbReference>
<dbReference type="InterPro" id="IPR047557">
    <property type="entry name" value="Rcat_RBR_HOIL1"/>
</dbReference>
<dbReference type="InterPro" id="IPR031912">
    <property type="entry name" value="Sharpin_PH"/>
</dbReference>
<dbReference type="InterPro" id="IPR044066">
    <property type="entry name" value="TRIAD_supradom"/>
</dbReference>
<dbReference type="InterPro" id="IPR029071">
    <property type="entry name" value="Ubiquitin-like_domsf"/>
</dbReference>
<dbReference type="InterPro" id="IPR001876">
    <property type="entry name" value="Znf_RanBP2"/>
</dbReference>
<dbReference type="InterPro" id="IPR036443">
    <property type="entry name" value="Znf_RanBP2_sf"/>
</dbReference>
<dbReference type="InterPro" id="IPR001841">
    <property type="entry name" value="Znf_RING"/>
</dbReference>
<dbReference type="InterPro" id="IPR013083">
    <property type="entry name" value="Znf_RING/FYVE/PHD"/>
</dbReference>
<dbReference type="InterPro" id="IPR017907">
    <property type="entry name" value="Znf_RING_CS"/>
</dbReference>
<dbReference type="PANTHER" id="PTHR22770:SF45">
    <property type="entry name" value="RANBP-TYPE AND C3HC4-TYPE ZINC FINGER-CONTAINING PROTEIN 1"/>
    <property type="match status" value="1"/>
</dbReference>
<dbReference type="PANTHER" id="PTHR22770">
    <property type="entry name" value="UBIQUITIN CONJUGATING ENZYME 7 INTERACTING PROTEIN-RELATED"/>
    <property type="match status" value="1"/>
</dbReference>
<dbReference type="Pfam" id="PF25393">
    <property type="entry name" value="LTM"/>
    <property type="match status" value="1"/>
</dbReference>
<dbReference type="Pfam" id="PF16764">
    <property type="entry name" value="Sharpin_PH"/>
    <property type="match status" value="1"/>
</dbReference>
<dbReference type="Pfam" id="PF00641">
    <property type="entry name" value="Zn_ribbon_RanBP"/>
    <property type="match status" value="1"/>
</dbReference>
<dbReference type="SMART" id="SM00547">
    <property type="entry name" value="ZnF_RBZ"/>
    <property type="match status" value="1"/>
</dbReference>
<dbReference type="SUPFAM" id="SSF50729">
    <property type="entry name" value="PH domain-like"/>
    <property type="match status" value="1"/>
</dbReference>
<dbReference type="SUPFAM" id="SSF90209">
    <property type="entry name" value="Ran binding protein zinc finger-like"/>
    <property type="match status" value="1"/>
</dbReference>
<dbReference type="SUPFAM" id="SSF57850">
    <property type="entry name" value="RING/U-box"/>
    <property type="match status" value="3"/>
</dbReference>
<dbReference type="SUPFAM" id="SSF54236">
    <property type="entry name" value="Ubiquitin-like"/>
    <property type="match status" value="1"/>
</dbReference>
<dbReference type="PROSITE" id="PS51873">
    <property type="entry name" value="TRIAD"/>
    <property type="match status" value="1"/>
</dbReference>
<dbReference type="PROSITE" id="PS01358">
    <property type="entry name" value="ZF_RANBP2_1"/>
    <property type="match status" value="1"/>
</dbReference>
<dbReference type="PROSITE" id="PS50199">
    <property type="entry name" value="ZF_RANBP2_2"/>
    <property type="match status" value="1"/>
</dbReference>
<dbReference type="PROSITE" id="PS00518">
    <property type="entry name" value="ZF_RING_1"/>
    <property type="match status" value="1"/>
</dbReference>
<dbReference type="PROSITE" id="PS50089">
    <property type="entry name" value="ZF_RING_2"/>
    <property type="match status" value="1"/>
</dbReference>
<reference key="1">
    <citation type="submission" date="2007-11" db="EMBL/GenBank/DDBJ databases">
        <authorList>
            <consortium name="NIH - Zebrafish Gene Collection (ZGC) project"/>
        </authorList>
    </citation>
    <scope>NUCLEOTIDE SEQUENCE [LARGE SCALE MRNA]</scope>
    <source>
        <tissue>Embryo</tissue>
    </source>
</reference>
<sequence length="714" mass="78912">MSLSSGGWTRASPPAQSSSSHLGHEASQSACSTVLMSVKVSVCHSGIRPLCLPGAGDESLRLQLSMDPGKAGEFRLALRDISATAAGRSVFIAEFDLKTVQYEVKTPLCHELSLATPPHDRISFKFRCEQEAQEWATVVMSSLREAHRVAISSSTEEGRLPPPPLATQSKAPMPRTEEICAELVSAIEAGDVRSASVCASSLAKQKAALSIQPSKRNYTDSEVCLAVVVEDASSSCCVSVKVFPHSTIGALKQQVFSDYGFHPRVQRWVIGQSLCSDHRSLASYGVQRDGDTAFLYLISARQARLSRGIYQQDQESALLMVPTTHQAHQEAVSNGPAALNTASRPYSTLPTRLHNSHNTLSNNAGGSERLGLSDIRDLINLELPQLNEALGPNRTSIQPGWACPTCTYINKPTRPGCEMCSADRPEGYTVPGNYRPDALELRRIQQEKEAIRQYQQARETERRENFARLVQMDGQDLVPNPERVECRICYVELESGEGVLLRECLHCFCKECLRSVILMSEDPQVACPYRDESYACDCVLQEREIRALVSVDDYQHWLQRGLSVAESRCEGSYHCATADCPGWCVYEDTVNTFHCPVCKKQNCLLCKAIHEGMNCKQYQDDLTARAINDSAARRTRDLLKTLVNSGEAMHCPQCGIIVQKKEGCDWLRCTVCHTEICWVTRGPRWGPKGPGDISGGCRCNVNKQRCHPKCQNCH</sequence>
<gene>
    <name type="primary">rbck1</name>
    <name type="ORF">zgc:175152</name>
</gene>
<comment type="function">
    <text evidence="1">Component of the LUBAC complex which conjugates linear ('Met-1'-linked) polyubiquitin chains to substrates and plays a key role in NF-kappa-B activation and regulation of inflammation (By similarity). LUBAC conjugates linear polyubiquitin to ikbkg and RIPK1 and is involved in activation of the canonical NF-kappa-B and the JNK signaling pathways (By similarity). Linear ubiquitination mediated by the LUBAC complex interferes with TNF-induced cell death and thereby prevents inflammation (By similarity). LUBAC is recruited to the TNF-R1 signaling complex (TNF-RSC) to conjugate linear polyubiquitin to ikbkg and possibly other components contributing to the stability of the complex (By similarity). The LUBAC complex is also involved in innate immunity by conjugating linear polyubiquitin chains at the surface of bacteria invading the cytosol to form the ubiquitin coat surrounding bacteria (By similarity). LUBAC is not able to initiate formation of the bacterial ubiquitin coat, and can only promote formation of linear polyubiquitins on pre-existing ubiquitin (By similarity). The bacterial ubiquitin coat acts as an 'eat-me' signal for xenophagy and promotes NF-kappa-B activation (By similarity). Binds polyubiquitin of different linkage types (By similarity).</text>
</comment>
<comment type="catalytic activity">
    <reaction evidence="1">
        <text>[E2 ubiquitin-conjugating enzyme]-S-ubiquitinyl-L-cysteine + [acceptor protein]-L-lysine = [E2 ubiquitin-conjugating enzyme]-L-cysteine + [acceptor protein]-N(6)-ubiquitinyl-L-lysine.</text>
        <dbReference type="EC" id="2.3.2.31"/>
    </reaction>
</comment>
<comment type="pathway">
    <text evidence="1">Protein modification; protein ubiquitination.</text>
</comment>
<comment type="subunit">
    <text evidence="1">Component of the LUBAC complex (linear ubiquitin chain assembly complex).</text>
</comment>
<comment type="domain">
    <text evidence="2">The RanBP2-type zinc finger, also called Npl4 zinc finger (NZF), mediates binding to 'Met-1'-linked polyubiquitins.</text>
</comment>
<comment type="domain">
    <text evidence="1">The UBL domain mediates association with RNF31 via interaction with its UBA domain.</text>
</comment>
<comment type="similarity">
    <text evidence="6">Belongs to the RBR family.</text>
</comment>
<organism>
    <name type="scientific">Danio rerio</name>
    <name type="common">Zebrafish</name>
    <name type="synonym">Brachydanio rerio</name>
    <dbReference type="NCBI Taxonomy" id="7955"/>
    <lineage>
        <taxon>Eukaryota</taxon>
        <taxon>Metazoa</taxon>
        <taxon>Chordata</taxon>
        <taxon>Craniata</taxon>
        <taxon>Vertebrata</taxon>
        <taxon>Euteleostomi</taxon>
        <taxon>Actinopterygii</taxon>
        <taxon>Neopterygii</taxon>
        <taxon>Teleostei</taxon>
        <taxon>Ostariophysi</taxon>
        <taxon>Cypriniformes</taxon>
        <taxon>Danionidae</taxon>
        <taxon>Danioninae</taxon>
        <taxon>Danio</taxon>
    </lineage>
</organism>
<feature type="chain" id="PRO_0000409509" description="RanBP-type and C3HC4-type zinc finger-containing protein 1">
    <location>
        <begin position="1"/>
        <end position="714"/>
    </location>
</feature>
<feature type="domain" description="Ubiquitin-like">
    <location>
        <begin position="225"/>
        <end position="301"/>
    </location>
</feature>
<feature type="zinc finger region" description="RanBP2-type" evidence="3">
    <location>
        <begin position="394"/>
        <end position="426"/>
    </location>
</feature>
<feature type="zinc finger region" description="RING-type 1" evidence="4">
    <location>
        <begin position="486"/>
        <end position="536"/>
    </location>
</feature>
<feature type="zinc finger region" description="IBR-type" evidence="4">
    <location>
        <begin position="555"/>
        <end position="615"/>
    </location>
</feature>
<feature type="zinc finger region" description="RING-type 2; atypical" evidence="4">
    <location>
        <begin position="651"/>
        <end position="680"/>
    </location>
</feature>
<feature type="region of interest" description="Disordered" evidence="5">
    <location>
        <begin position="1"/>
        <end position="23"/>
    </location>
</feature>
<feature type="region of interest" description="Disordered" evidence="5">
    <location>
        <begin position="152"/>
        <end position="172"/>
    </location>
</feature>
<feature type="region of interest" description="TRIAD supradomain" evidence="4">
    <location>
        <begin position="482"/>
        <end position="710"/>
    </location>
</feature>
<feature type="compositionally biased region" description="Polar residues" evidence="5">
    <location>
        <begin position="14"/>
        <end position="23"/>
    </location>
</feature>
<feature type="active site" evidence="4">
    <location>
        <position position="664"/>
    </location>
</feature>
<feature type="binding site" evidence="4">
    <location>
        <position position="486"/>
    </location>
    <ligand>
        <name>Zn(2+)</name>
        <dbReference type="ChEBI" id="CHEBI:29105"/>
        <label>1</label>
    </ligand>
</feature>
<feature type="binding site" evidence="4">
    <location>
        <position position="489"/>
    </location>
    <ligand>
        <name>Zn(2+)</name>
        <dbReference type="ChEBI" id="CHEBI:29105"/>
        <label>1</label>
    </ligand>
</feature>
<feature type="binding site" evidence="4">
    <location>
        <position position="504"/>
    </location>
    <ligand>
        <name>Zn(2+)</name>
        <dbReference type="ChEBI" id="CHEBI:29105"/>
        <label>2</label>
    </ligand>
</feature>
<feature type="binding site" evidence="4">
    <location>
        <position position="506"/>
    </location>
    <ligand>
        <name>Zn(2+)</name>
        <dbReference type="ChEBI" id="CHEBI:29105"/>
        <label>2</label>
    </ligand>
</feature>
<feature type="binding site" evidence="4">
    <location>
        <position position="509"/>
    </location>
    <ligand>
        <name>Zn(2+)</name>
        <dbReference type="ChEBI" id="CHEBI:29105"/>
        <label>1</label>
    </ligand>
</feature>
<feature type="binding site" evidence="4">
    <location>
        <position position="512"/>
    </location>
    <ligand>
        <name>Zn(2+)</name>
        <dbReference type="ChEBI" id="CHEBI:29105"/>
        <label>1</label>
    </ligand>
</feature>
<feature type="binding site" evidence="4">
    <location>
        <position position="527"/>
    </location>
    <ligand>
        <name>Zn(2+)</name>
        <dbReference type="ChEBI" id="CHEBI:29105"/>
        <label>2</label>
    </ligand>
</feature>
<feature type="binding site" evidence="4">
    <location>
        <position position="536"/>
    </location>
    <ligand>
        <name>Zn(2+)</name>
        <dbReference type="ChEBI" id="CHEBI:29105"/>
        <label>2</label>
    </ligand>
</feature>
<feature type="binding site" evidence="4">
    <location>
        <position position="575"/>
    </location>
    <ligand>
        <name>Zn(2+)</name>
        <dbReference type="ChEBI" id="CHEBI:29105"/>
        <label>3</label>
    </ligand>
</feature>
<feature type="binding site" evidence="4">
    <location>
        <position position="580"/>
    </location>
    <ligand>
        <name>Zn(2+)</name>
        <dbReference type="ChEBI" id="CHEBI:29105"/>
        <label>3</label>
    </ligand>
</feature>
<feature type="binding site" evidence="4">
    <location>
        <position position="595"/>
    </location>
    <ligand>
        <name>Zn(2+)</name>
        <dbReference type="ChEBI" id="CHEBI:29105"/>
        <label>3</label>
    </ligand>
</feature>
<feature type="binding site" evidence="4">
    <location>
        <position position="598"/>
    </location>
    <ligand>
        <name>Zn(2+)</name>
        <dbReference type="ChEBI" id="CHEBI:29105"/>
        <label>3</label>
    </ligand>
</feature>
<feature type="binding site" evidence="4">
    <location>
        <position position="603"/>
    </location>
    <ligand>
        <name>Zn(2+)</name>
        <dbReference type="ChEBI" id="CHEBI:29105"/>
        <label>4</label>
    </ligand>
</feature>
<feature type="binding site" evidence="4">
    <location>
        <position position="606"/>
    </location>
    <ligand>
        <name>Zn(2+)</name>
        <dbReference type="ChEBI" id="CHEBI:29105"/>
        <label>4</label>
    </ligand>
</feature>
<feature type="binding site" evidence="4">
    <location>
        <position position="610"/>
    </location>
    <ligand>
        <name>Zn(2+)</name>
        <dbReference type="ChEBI" id="CHEBI:29105"/>
        <label>4</label>
    </ligand>
</feature>
<feature type="binding site" evidence="4">
    <location>
        <position position="615"/>
    </location>
    <ligand>
        <name>Zn(2+)</name>
        <dbReference type="ChEBI" id="CHEBI:29105"/>
        <label>4</label>
    </ligand>
</feature>
<feature type="binding site" evidence="4">
    <location>
        <position position="651"/>
    </location>
    <ligand>
        <name>Zn(2+)</name>
        <dbReference type="ChEBI" id="CHEBI:29105"/>
        <label>5</label>
    </ligand>
</feature>
<feature type="binding site" evidence="4">
    <location>
        <position position="654"/>
    </location>
    <ligand>
        <name>Zn(2+)</name>
        <dbReference type="ChEBI" id="CHEBI:29105"/>
        <label>5</label>
    </ligand>
</feature>
<feature type="binding site" evidence="4">
    <location>
        <position position="669"/>
    </location>
    <ligand>
        <name>Zn(2+)</name>
        <dbReference type="ChEBI" id="CHEBI:29105"/>
        <label>5</label>
    </ligand>
</feature>
<feature type="binding site" evidence="4">
    <location>
        <position position="672"/>
    </location>
    <ligand>
        <name>Zn(2+)</name>
        <dbReference type="ChEBI" id="CHEBI:29105"/>
        <label>5</label>
    </ligand>
</feature>
<name>HOIL1_DANRE</name>
<protein>
    <recommendedName>
        <fullName>RanBP-type and C3HC4-type zinc finger-containing protein 1</fullName>
        <ecNumber evidence="1">2.3.2.31</ecNumber>
    </recommendedName>
    <alternativeName>
        <fullName>Heme-oxidized IRP2 ubiquitin ligase 1 homolog</fullName>
        <shortName>HOIL-1</shortName>
    </alternativeName>
    <alternativeName>
        <fullName evidence="6">Heme-oxidized IRP2 ubiquitin transferase 1 homolog</fullName>
    </alternativeName>
</protein>
<proteinExistence type="evidence at transcript level"/>